<protein>
    <recommendedName>
        <fullName evidence="1">Small ribosomal subunit protein uS4</fullName>
    </recommendedName>
    <alternativeName>
        <fullName evidence="2">30S ribosomal protein S4</fullName>
    </alternativeName>
</protein>
<feature type="chain" id="PRO_0000132408" description="Small ribosomal subunit protein uS4">
    <location>
        <begin position="1"/>
        <end position="206"/>
    </location>
</feature>
<feature type="domain" description="S4 RNA-binding" evidence="1">
    <location>
        <begin position="96"/>
        <end position="156"/>
    </location>
</feature>
<reference key="1">
    <citation type="journal article" date="2004" name="Nat. Biotechnol.">
        <title>The genome sequence of the capnophilic rumen bacterium Mannheimia succiniciproducens.</title>
        <authorList>
            <person name="Hong S.H."/>
            <person name="Kim J.S."/>
            <person name="Lee S.Y."/>
            <person name="In Y.H."/>
            <person name="Choi S.S."/>
            <person name="Rih J.-K."/>
            <person name="Kim C.H."/>
            <person name="Jeong H."/>
            <person name="Hur C.G."/>
            <person name="Kim J.J."/>
        </authorList>
    </citation>
    <scope>NUCLEOTIDE SEQUENCE [LARGE SCALE GENOMIC DNA]</scope>
    <source>
        <strain>KCTC 0769BP / MBEL55E</strain>
    </source>
</reference>
<accession>Q65QX9</accession>
<comment type="function">
    <text evidence="1">One of the primary rRNA binding proteins, it binds directly to 16S rRNA where it nucleates assembly of the body of the 30S subunit.</text>
</comment>
<comment type="function">
    <text evidence="1">With S5 and S12 plays an important role in translational accuracy.</text>
</comment>
<comment type="subunit">
    <text evidence="1">Part of the 30S ribosomal subunit. Contacts protein S5. The interaction surface between S4 and S5 is involved in control of translational fidelity.</text>
</comment>
<comment type="similarity">
    <text evidence="1">Belongs to the universal ribosomal protein uS4 family.</text>
</comment>
<name>RS4_MANSM</name>
<dbReference type="EMBL" id="AE016827">
    <property type="protein sequence ID" value="AAU38631.1"/>
    <property type="molecule type" value="Genomic_DNA"/>
</dbReference>
<dbReference type="RefSeq" id="WP_011201182.1">
    <property type="nucleotide sequence ID" value="NC_006300.1"/>
</dbReference>
<dbReference type="SMR" id="Q65QX9"/>
<dbReference type="STRING" id="221988.MS2024"/>
<dbReference type="KEGG" id="msu:MS2024"/>
<dbReference type="eggNOG" id="COG0522">
    <property type="taxonomic scope" value="Bacteria"/>
</dbReference>
<dbReference type="HOGENOM" id="CLU_092403_0_2_6"/>
<dbReference type="OrthoDB" id="9803672at2"/>
<dbReference type="Proteomes" id="UP000000607">
    <property type="component" value="Chromosome"/>
</dbReference>
<dbReference type="GO" id="GO:0015935">
    <property type="term" value="C:small ribosomal subunit"/>
    <property type="evidence" value="ECO:0007669"/>
    <property type="project" value="InterPro"/>
</dbReference>
<dbReference type="GO" id="GO:0019843">
    <property type="term" value="F:rRNA binding"/>
    <property type="evidence" value="ECO:0007669"/>
    <property type="project" value="UniProtKB-UniRule"/>
</dbReference>
<dbReference type="GO" id="GO:0003735">
    <property type="term" value="F:structural constituent of ribosome"/>
    <property type="evidence" value="ECO:0007669"/>
    <property type="project" value="InterPro"/>
</dbReference>
<dbReference type="GO" id="GO:0042274">
    <property type="term" value="P:ribosomal small subunit biogenesis"/>
    <property type="evidence" value="ECO:0007669"/>
    <property type="project" value="TreeGrafter"/>
</dbReference>
<dbReference type="GO" id="GO:0006412">
    <property type="term" value="P:translation"/>
    <property type="evidence" value="ECO:0007669"/>
    <property type="project" value="UniProtKB-UniRule"/>
</dbReference>
<dbReference type="CDD" id="cd00165">
    <property type="entry name" value="S4"/>
    <property type="match status" value="1"/>
</dbReference>
<dbReference type="FunFam" id="1.10.1050.10:FF:000001">
    <property type="entry name" value="30S ribosomal protein S4"/>
    <property type="match status" value="1"/>
</dbReference>
<dbReference type="FunFam" id="3.10.290.10:FF:000001">
    <property type="entry name" value="30S ribosomal protein S4"/>
    <property type="match status" value="1"/>
</dbReference>
<dbReference type="Gene3D" id="1.10.1050.10">
    <property type="entry name" value="Ribosomal Protein S4 Delta 41, Chain A, domain 1"/>
    <property type="match status" value="1"/>
</dbReference>
<dbReference type="Gene3D" id="3.10.290.10">
    <property type="entry name" value="RNA-binding S4 domain"/>
    <property type="match status" value="1"/>
</dbReference>
<dbReference type="HAMAP" id="MF_01306_B">
    <property type="entry name" value="Ribosomal_uS4_B"/>
    <property type="match status" value="1"/>
</dbReference>
<dbReference type="InterPro" id="IPR022801">
    <property type="entry name" value="Ribosomal_uS4"/>
</dbReference>
<dbReference type="InterPro" id="IPR005709">
    <property type="entry name" value="Ribosomal_uS4_bac-type"/>
</dbReference>
<dbReference type="InterPro" id="IPR018079">
    <property type="entry name" value="Ribosomal_uS4_CS"/>
</dbReference>
<dbReference type="InterPro" id="IPR001912">
    <property type="entry name" value="Ribosomal_uS4_N"/>
</dbReference>
<dbReference type="InterPro" id="IPR002942">
    <property type="entry name" value="S4_RNA-bd"/>
</dbReference>
<dbReference type="InterPro" id="IPR036986">
    <property type="entry name" value="S4_RNA-bd_sf"/>
</dbReference>
<dbReference type="NCBIfam" id="NF003717">
    <property type="entry name" value="PRK05327.1"/>
    <property type="match status" value="1"/>
</dbReference>
<dbReference type="NCBIfam" id="TIGR01017">
    <property type="entry name" value="rpsD_bact"/>
    <property type="match status" value="1"/>
</dbReference>
<dbReference type="PANTHER" id="PTHR11831">
    <property type="entry name" value="30S 40S RIBOSOMAL PROTEIN"/>
    <property type="match status" value="1"/>
</dbReference>
<dbReference type="PANTHER" id="PTHR11831:SF4">
    <property type="entry name" value="SMALL RIBOSOMAL SUBUNIT PROTEIN US4M"/>
    <property type="match status" value="1"/>
</dbReference>
<dbReference type="Pfam" id="PF00163">
    <property type="entry name" value="Ribosomal_S4"/>
    <property type="match status" value="1"/>
</dbReference>
<dbReference type="Pfam" id="PF01479">
    <property type="entry name" value="S4"/>
    <property type="match status" value="1"/>
</dbReference>
<dbReference type="SMART" id="SM01390">
    <property type="entry name" value="Ribosomal_S4"/>
    <property type="match status" value="1"/>
</dbReference>
<dbReference type="SMART" id="SM00363">
    <property type="entry name" value="S4"/>
    <property type="match status" value="1"/>
</dbReference>
<dbReference type="SUPFAM" id="SSF55174">
    <property type="entry name" value="Alpha-L RNA-binding motif"/>
    <property type="match status" value="1"/>
</dbReference>
<dbReference type="PROSITE" id="PS00632">
    <property type="entry name" value="RIBOSOMAL_S4"/>
    <property type="match status" value="1"/>
</dbReference>
<dbReference type="PROSITE" id="PS50889">
    <property type="entry name" value="S4"/>
    <property type="match status" value="1"/>
</dbReference>
<organism>
    <name type="scientific">Mannheimia succiniciproducens (strain KCTC 0769BP / MBEL55E)</name>
    <dbReference type="NCBI Taxonomy" id="221988"/>
    <lineage>
        <taxon>Bacteria</taxon>
        <taxon>Pseudomonadati</taxon>
        <taxon>Pseudomonadota</taxon>
        <taxon>Gammaproteobacteria</taxon>
        <taxon>Pasteurellales</taxon>
        <taxon>Pasteurellaceae</taxon>
        <taxon>Basfia</taxon>
    </lineage>
</organism>
<proteinExistence type="inferred from homology"/>
<sequence>MARYLGPKLKLSRREGTDLFLKSGVRAIDSKCKIDTAPGQHGARKPRLSDYGSQLREKQKVRRIYGILERQFRNYYKEANRLKGNTGENLLVLLEGRLDNVVYRMGFAATRAEARQLVSHKAIVVNGRVVNIPSFQVSVDDVVAVREKSKKQARIKASLELAEQREKPTWLEVDAAKMEGVFKRVPERSDLSADINEHLIVELYSK</sequence>
<evidence type="ECO:0000255" key="1">
    <source>
        <dbReference type="HAMAP-Rule" id="MF_01306"/>
    </source>
</evidence>
<evidence type="ECO:0000305" key="2"/>
<keyword id="KW-0687">Ribonucleoprotein</keyword>
<keyword id="KW-0689">Ribosomal protein</keyword>
<keyword id="KW-0694">RNA-binding</keyword>
<keyword id="KW-0699">rRNA-binding</keyword>
<gene>
    <name evidence="1" type="primary">rpsD</name>
    <name type="ordered locus">MS2024</name>
</gene>